<dbReference type="EC" id="3.4.19.12"/>
<dbReference type="EMBL" id="CU329671">
    <property type="protein sequence ID" value="CAB66456.1"/>
    <property type="molecule type" value="Genomic_DNA"/>
</dbReference>
<dbReference type="PIR" id="T50325">
    <property type="entry name" value="T50325"/>
</dbReference>
<dbReference type="RefSeq" id="NP_596207.1">
    <property type="nucleotide sequence ID" value="NM_001022126.2"/>
</dbReference>
<dbReference type="SMR" id="Q9P7V9"/>
<dbReference type="BioGRID" id="276657">
    <property type="interactions" value="12"/>
</dbReference>
<dbReference type="FunCoup" id="Q9P7V9">
    <property type="interactions" value="382"/>
</dbReference>
<dbReference type="STRING" id="284812.Q9P7V9"/>
<dbReference type="MEROPS" id="C19.A62"/>
<dbReference type="iPTMnet" id="Q9P7V9"/>
<dbReference type="PaxDb" id="4896-SPBC1703.12.1"/>
<dbReference type="EnsemblFungi" id="SPBC1703.12.1">
    <property type="protein sequence ID" value="SPBC1703.12.1:pep"/>
    <property type="gene ID" value="SPBC1703.12"/>
</dbReference>
<dbReference type="GeneID" id="2540120"/>
<dbReference type="KEGG" id="spo:2540120"/>
<dbReference type="PomBase" id="SPBC1703.12">
    <property type="gene designation" value="ubp9"/>
</dbReference>
<dbReference type="VEuPathDB" id="FungiDB:SPBC1703.12"/>
<dbReference type="eggNOG" id="KOG1864">
    <property type="taxonomic scope" value="Eukaryota"/>
</dbReference>
<dbReference type="HOGENOM" id="CLU_008279_12_2_1"/>
<dbReference type="InParanoid" id="Q9P7V9"/>
<dbReference type="OMA" id="ANFGNTC"/>
<dbReference type="PhylomeDB" id="Q9P7V9"/>
<dbReference type="Reactome" id="R-SPO-5689880">
    <property type="pathway name" value="Ub-specific processing proteases"/>
</dbReference>
<dbReference type="PRO" id="PR:Q9P7V9"/>
<dbReference type="Proteomes" id="UP000002485">
    <property type="component" value="Chromosome II"/>
</dbReference>
<dbReference type="GO" id="GO:0032153">
    <property type="term" value="C:cell division site"/>
    <property type="evidence" value="ECO:0007005"/>
    <property type="project" value="PomBase"/>
</dbReference>
<dbReference type="GO" id="GO:0051286">
    <property type="term" value="C:cell tip"/>
    <property type="evidence" value="ECO:0007005"/>
    <property type="project" value="PomBase"/>
</dbReference>
<dbReference type="GO" id="GO:0005829">
    <property type="term" value="C:cytosol"/>
    <property type="evidence" value="ECO:0007005"/>
    <property type="project" value="PomBase"/>
</dbReference>
<dbReference type="GO" id="GO:0005634">
    <property type="term" value="C:nucleus"/>
    <property type="evidence" value="ECO:0007005"/>
    <property type="project" value="PomBase"/>
</dbReference>
<dbReference type="GO" id="GO:0004843">
    <property type="term" value="F:cysteine-type deubiquitinase activity"/>
    <property type="evidence" value="ECO:0000318"/>
    <property type="project" value="GO_Central"/>
</dbReference>
<dbReference type="GO" id="GO:0140492">
    <property type="term" value="F:metal-dependent deubiquitinase activity"/>
    <property type="evidence" value="ECO:0000314"/>
    <property type="project" value="PomBase"/>
</dbReference>
<dbReference type="GO" id="GO:0006897">
    <property type="term" value="P:endocytosis"/>
    <property type="evidence" value="ECO:0000315"/>
    <property type="project" value="PomBase"/>
</dbReference>
<dbReference type="GO" id="GO:0016579">
    <property type="term" value="P:protein deubiquitination"/>
    <property type="evidence" value="ECO:0007669"/>
    <property type="project" value="InterPro"/>
</dbReference>
<dbReference type="GO" id="GO:0006508">
    <property type="term" value="P:proteolysis"/>
    <property type="evidence" value="ECO:0007669"/>
    <property type="project" value="UniProtKB-KW"/>
</dbReference>
<dbReference type="GO" id="GO:0031647">
    <property type="term" value="P:regulation of protein stability"/>
    <property type="evidence" value="ECO:0000318"/>
    <property type="project" value="GO_Central"/>
</dbReference>
<dbReference type="CDD" id="cd02663">
    <property type="entry name" value="Peptidase_C19G"/>
    <property type="match status" value="1"/>
</dbReference>
<dbReference type="Gene3D" id="3.90.70.10">
    <property type="entry name" value="Cysteine proteinases"/>
    <property type="match status" value="1"/>
</dbReference>
<dbReference type="InterPro" id="IPR038765">
    <property type="entry name" value="Papain-like_cys_pep_sf"/>
</dbReference>
<dbReference type="InterPro" id="IPR050164">
    <property type="entry name" value="Peptidase_C19"/>
</dbReference>
<dbReference type="InterPro" id="IPR001394">
    <property type="entry name" value="Peptidase_C19_UCH"/>
</dbReference>
<dbReference type="InterPro" id="IPR018200">
    <property type="entry name" value="USP_CS"/>
</dbReference>
<dbReference type="InterPro" id="IPR028889">
    <property type="entry name" value="USP_dom"/>
</dbReference>
<dbReference type="PANTHER" id="PTHR24006:SF733">
    <property type="entry name" value="RE52890P"/>
    <property type="match status" value="1"/>
</dbReference>
<dbReference type="PANTHER" id="PTHR24006">
    <property type="entry name" value="UBIQUITIN CARBOXYL-TERMINAL HYDROLASE"/>
    <property type="match status" value="1"/>
</dbReference>
<dbReference type="Pfam" id="PF00443">
    <property type="entry name" value="UCH"/>
    <property type="match status" value="1"/>
</dbReference>
<dbReference type="SUPFAM" id="SSF54001">
    <property type="entry name" value="Cysteine proteinases"/>
    <property type="match status" value="1"/>
</dbReference>
<dbReference type="PROSITE" id="PS00973">
    <property type="entry name" value="USP_2"/>
    <property type="match status" value="1"/>
</dbReference>
<dbReference type="PROSITE" id="PS50235">
    <property type="entry name" value="USP_3"/>
    <property type="match status" value="1"/>
</dbReference>
<protein>
    <recommendedName>
        <fullName>Probable ubiquitin carboxyl-terminal hydrolase 9</fullName>
        <ecNumber>3.4.19.12</ecNumber>
    </recommendedName>
    <alternativeName>
        <fullName>Deubiquitinating enzyme 9</fullName>
    </alternativeName>
    <alternativeName>
        <fullName>Ubiquitin thioesterase 9</fullName>
    </alternativeName>
    <alternativeName>
        <fullName>Ubiquitin-specific-processing protease 9</fullName>
    </alternativeName>
</protein>
<comment type="function">
    <text evidence="4">Ubiquitin C-terminal hydrolase involved in regulating actin dynamics and/or endocytosis at cell tips and septa.</text>
</comment>
<comment type="catalytic activity">
    <reaction>
        <text>Thiol-dependent hydrolysis of ester, thioester, amide, peptide and isopeptide bonds formed by the C-terminal Gly of ubiquitin (a 76-residue protein attached to proteins as an intracellular targeting signal).</text>
        <dbReference type="EC" id="3.4.19.12"/>
    </reaction>
</comment>
<comment type="subunit">
    <text evidence="4">Interacts with bun107 and bun62.</text>
</comment>
<comment type="subcellular location">
    <subcellularLocation>
        <location evidence="4">Nucleus</location>
    </subcellularLocation>
    <subcellularLocation>
        <location evidence="4">Cytoplasm</location>
    </subcellularLocation>
    <subcellularLocation>
        <location evidence="4">Cell tip</location>
    </subcellularLocation>
</comment>
<comment type="similarity">
    <text evidence="5">Belongs to the peptidase C19 family.</text>
</comment>
<proteinExistence type="evidence at protein level"/>
<sequence>MSLLRWMGMNSPGSTDRRKSTWEAELPKPSIRPETLTDRFYGLTNYGNTCYVSSVLVSLYHLKPFRDSLNSYPLPSAPPNFKSVCTKTNHPESSSSRHSKKKSMENRKSSLYGSNGINSCGCVDISNVGSESGTKHQIVVGESNCSAYGMKENIYTCLKDLYCSVSCCDCRYGICSPERFIQVLRRDNEAFRSTQQQDAHEFFNFLLNSVTETLDEYYGNHSDVMHPKWVHSLFEGTLTSETKCLTCENITSRDESFLDLSIDIENHTSVTSCLRSFSASEMLSSKNKFHCDVCKSLQEAEKRMKIKKLPKILSLHLKRFKYNETQEGHDKLFYTIVFTNEMRLFTTTEDAENAERMYYLSSVIVHVGGGPHRGHYVSIVRTKTYGWVLFDDENVTPVNENYLQRFFGDQPGQATAYVLFYTAADEEDDDVSEVDTKESIKPMSIPSQLKQESVEVSNLSSTPRSNSTITYPDMDPMVASFSSQYSHKTLDRDINSRSYFDREPSLDAERFHSRSVDASPKAVRRESRSFFPSLTRKRSKFFGSSQSNSPKDSPLRDTHKSSDEHSESKHSHTLPWQFSRSRSKR</sequence>
<keyword id="KW-0963">Cytoplasm</keyword>
<keyword id="KW-0378">Hydrolase</keyword>
<keyword id="KW-0539">Nucleus</keyword>
<keyword id="KW-0597">Phosphoprotein</keyword>
<keyword id="KW-0645">Protease</keyword>
<keyword id="KW-1185">Reference proteome</keyword>
<keyword id="KW-0788">Thiol protease</keyword>
<keyword id="KW-0833">Ubl conjugation pathway</keyword>
<organism>
    <name type="scientific">Schizosaccharomyces pombe (strain 972 / ATCC 24843)</name>
    <name type="common">Fission yeast</name>
    <dbReference type="NCBI Taxonomy" id="284812"/>
    <lineage>
        <taxon>Eukaryota</taxon>
        <taxon>Fungi</taxon>
        <taxon>Dikarya</taxon>
        <taxon>Ascomycota</taxon>
        <taxon>Taphrinomycotina</taxon>
        <taxon>Schizosaccharomycetes</taxon>
        <taxon>Schizosaccharomycetales</taxon>
        <taxon>Schizosaccharomycetaceae</taxon>
        <taxon>Schizosaccharomyces</taxon>
    </lineage>
</organism>
<reference key="1">
    <citation type="journal article" date="2002" name="Nature">
        <title>The genome sequence of Schizosaccharomyces pombe.</title>
        <authorList>
            <person name="Wood V."/>
            <person name="Gwilliam R."/>
            <person name="Rajandream M.A."/>
            <person name="Lyne M.H."/>
            <person name="Lyne R."/>
            <person name="Stewart A."/>
            <person name="Sgouros J.G."/>
            <person name="Peat N."/>
            <person name="Hayles J."/>
            <person name="Baker S.G."/>
            <person name="Basham D."/>
            <person name="Bowman S."/>
            <person name="Brooks K."/>
            <person name="Brown D."/>
            <person name="Brown S."/>
            <person name="Chillingworth T."/>
            <person name="Churcher C.M."/>
            <person name="Collins M."/>
            <person name="Connor R."/>
            <person name="Cronin A."/>
            <person name="Davis P."/>
            <person name="Feltwell T."/>
            <person name="Fraser A."/>
            <person name="Gentles S."/>
            <person name="Goble A."/>
            <person name="Hamlin N."/>
            <person name="Harris D.E."/>
            <person name="Hidalgo J."/>
            <person name="Hodgson G."/>
            <person name="Holroyd S."/>
            <person name="Hornsby T."/>
            <person name="Howarth S."/>
            <person name="Huckle E.J."/>
            <person name="Hunt S."/>
            <person name="Jagels K."/>
            <person name="James K.D."/>
            <person name="Jones L."/>
            <person name="Jones M."/>
            <person name="Leather S."/>
            <person name="McDonald S."/>
            <person name="McLean J."/>
            <person name="Mooney P."/>
            <person name="Moule S."/>
            <person name="Mungall K.L."/>
            <person name="Murphy L.D."/>
            <person name="Niblett D."/>
            <person name="Odell C."/>
            <person name="Oliver K."/>
            <person name="O'Neil S."/>
            <person name="Pearson D."/>
            <person name="Quail M.A."/>
            <person name="Rabbinowitsch E."/>
            <person name="Rutherford K.M."/>
            <person name="Rutter S."/>
            <person name="Saunders D."/>
            <person name="Seeger K."/>
            <person name="Sharp S."/>
            <person name="Skelton J."/>
            <person name="Simmonds M.N."/>
            <person name="Squares R."/>
            <person name="Squares S."/>
            <person name="Stevens K."/>
            <person name="Taylor K."/>
            <person name="Taylor R.G."/>
            <person name="Tivey A."/>
            <person name="Walsh S.V."/>
            <person name="Warren T."/>
            <person name="Whitehead S."/>
            <person name="Woodward J.R."/>
            <person name="Volckaert G."/>
            <person name="Aert R."/>
            <person name="Robben J."/>
            <person name="Grymonprez B."/>
            <person name="Weltjens I."/>
            <person name="Vanstreels E."/>
            <person name="Rieger M."/>
            <person name="Schaefer M."/>
            <person name="Mueller-Auer S."/>
            <person name="Gabel C."/>
            <person name="Fuchs M."/>
            <person name="Duesterhoeft A."/>
            <person name="Fritzc C."/>
            <person name="Holzer E."/>
            <person name="Moestl D."/>
            <person name="Hilbert H."/>
            <person name="Borzym K."/>
            <person name="Langer I."/>
            <person name="Beck A."/>
            <person name="Lehrach H."/>
            <person name="Reinhardt R."/>
            <person name="Pohl T.M."/>
            <person name="Eger P."/>
            <person name="Zimmermann W."/>
            <person name="Wedler H."/>
            <person name="Wambutt R."/>
            <person name="Purnelle B."/>
            <person name="Goffeau A."/>
            <person name="Cadieu E."/>
            <person name="Dreano S."/>
            <person name="Gloux S."/>
            <person name="Lelaure V."/>
            <person name="Mottier S."/>
            <person name="Galibert F."/>
            <person name="Aves S.J."/>
            <person name="Xiang Z."/>
            <person name="Hunt C."/>
            <person name="Moore K."/>
            <person name="Hurst S.M."/>
            <person name="Lucas M."/>
            <person name="Rochet M."/>
            <person name="Gaillardin C."/>
            <person name="Tallada V.A."/>
            <person name="Garzon A."/>
            <person name="Thode G."/>
            <person name="Daga R.R."/>
            <person name="Cruzado L."/>
            <person name="Jimenez J."/>
            <person name="Sanchez M."/>
            <person name="del Rey F."/>
            <person name="Benito J."/>
            <person name="Dominguez A."/>
            <person name="Revuelta J.L."/>
            <person name="Moreno S."/>
            <person name="Armstrong J."/>
            <person name="Forsburg S.L."/>
            <person name="Cerutti L."/>
            <person name="Lowe T."/>
            <person name="McCombie W.R."/>
            <person name="Paulsen I."/>
            <person name="Potashkin J."/>
            <person name="Shpakovski G.V."/>
            <person name="Ussery D."/>
            <person name="Barrell B.G."/>
            <person name="Nurse P."/>
        </authorList>
    </citation>
    <scope>NUCLEOTIDE SEQUENCE [LARGE SCALE GENOMIC DNA]</scope>
    <source>
        <strain>972 / ATCC 24843</strain>
    </source>
</reference>
<reference key="2">
    <citation type="journal article" date="2008" name="J. Proteome Res.">
        <title>Phosphoproteome analysis of fission yeast.</title>
        <authorList>
            <person name="Wilson-Grady J.T."/>
            <person name="Villen J."/>
            <person name="Gygi S.P."/>
        </authorList>
    </citation>
    <scope>PHOSPHORYLATION [LARGE SCALE ANALYSIS] AT SER-505 AND SER-549</scope>
    <scope>IDENTIFICATION BY MASS SPECTROMETRY</scope>
</reference>
<reference key="3">
    <citation type="journal article" date="2010" name="PLoS Biol.">
        <title>A global census of fission yeast deubiquitinating enzyme localization and interaction networks reveals distinct compartmentalization profiles and overlapping functions in endocytosis and polarity.</title>
        <authorList>
            <person name="Kouranti I."/>
            <person name="McLean J.R."/>
            <person name="Feoktistova A."/>
            <person name="Liang P."/>
            <person name="Johnson A.E."/>
            <person name="Roberts-Galbraith R.H."/>
            <person name="Gould K.L."/>
        </authorList>
    </citation>
    <scope>FUNCTION</scope>
    <scope>SUBCELLULAR LOCATION</scope>
    <scope>INTERACTION WITH BUN107 AND BUN62</scope>
</reference>
<feature type="chain" id="PRO_0000080610" description="Probable ubiquitin carboxyl-terminal hydrolase 9">
    <location>
        <begin position="1"/>
        <end position="585"/>
    </location>
</feature>
<feature type="domain" description="USP">
    <location>
        <begin position="41"/>
        <end position="424"/>
    </location>
</feature>
<feature type="region of interest" description="Disordered" evidence="2">
    <location>
        <begin position="1"/>
        <end position="23"/>
    </location>
</feature>
<feature type="region of interest" description="Disordered" evidence="2">
    <location>
        <begin position="85"/>
        <end position="110"/>
    </location>
</feature>
<feature type="region of interest" description="Disordered" evidence="2">
    <location>
        <begin position="447"/>
        <end position="473"/>
    </location>
</feature>
<feature type="region of interest" description="Disordered" evidence="2">
    <location>
        <begin position="511"/>
        <end position="530"/>
    </location>
</feature>
<feature type="region of interest" description="Disordered" evidence="2">
    <location>
        <begin position="540"/>
        <end position="585"/>
    </location>
</feature>
<feature type="compositionally biased region" description="Polar residues" evidence="2">
    <location>
        <begin position="447"/>
        <end position="470"/>
    </location>
</feature>
<feature type="compositionally biased region" description="Polar residues" evidence="2">
    <location>
        <begin position="542"/>
        <end position="551"/>
    </location>
</feature>
<feature type="compositionally biased region" description="Basic and acidic residues" evidence="2">
    <location>
        <begin position="553"/>
        <end position="570"/>
    </location>
</feature>
<feature type="compositionally biased region" description="Polar residues" evidence="2">
    <location>
        <begin position="574"/>
        <end position="585"/>
    </location>
</feature>
<feature type="active site" description="Nucleophile" evidence="1">
    <location>
        <position position="50"/>
    </location>
</feature>
<feature type="active site" description="Proton acceptor" evidence="1">
    <location>
        <position position="375"/>
    </location>
</feature>
<feature type="modified residue" description="Phosphoserine" evidence="3">
    <location>
        <position position="505"/>
    </location>
</feature>
<feature type="modified residue" description="Phosphoserine" evidence="3">
    <location>
        <position position="549"/>
    </location>
</feature>
<gene>
    <name type="primary">ubp9</name>
    <name type="ORF">SPBC1703.12</name>
</gene>
<name>UBP9_SCHPO</name>
<accession>Q9P7V9</accession>
<evidence type="ECO:0000255" key="1">
    <source>
        <dbReference type="PROSITE-ProRule" id="PRU10093"/>
    </source>
</evidence>
<evidence type="ECO:0000256" key="2">
    <source>
        <dbReference type="SAM" id="MobiDB-lite"/>
    </source>
</evidence>
<evidence type="ECO:0000269" key="3">
    <source>
    </source>
</evidence>
<evidence type="ECO:0000269" key="4">
    <source>
    </source>
</evidence>
<evidence type="ECO:0000305" key="5"/>